<sequence length="68" mass="7985">MKPVDVRAMTEDQLKDSLLKLKEEQFKLRFQQASGQMENTARYGQIRRDIARIQTVQTERNSQEEQGS</sequence>
<keyword id="KW-1185">Reference proteome</keyword>
<keyword id="KW-0687">Ribonucleoprotein</keyword>
<keyword id="KW-0689">Ribosomal protein</keyword>
<dbReference type="EMBL" id="CP000449">
    <property type="protein sequence ID" value="ABI66079.1"/>
    <property type="molecule type" value="Genomic_DNA"/>
</dbReference>
<dbReference type="RefSeq" id="WP_011643725.1">
    <property type="nucleotide sequence ID" value="NC_008347.1"/>
</dbReference>
<dbReference type="SMR" id="Q0ANQ8"/>
<dbReference type="STRING" id="394221.Mmar10_1787"/>
<dbReference type="KEGG" id="mmr:Mmar10_1787"/>
<dbReference type="eggNOG" id="COG0255">
    <property type="taxonomic scope" value="Bacteria"/>
</dbReference>
<dbReference type="HOGENOM" id="CLU_158491_1_0_5"/>
<dbReference type="OrthoDB" id="9815192at2"/>
<dbReference type="Proteomes" id="UP000001964">
    <property type="component" value="Chromosome"/>
</dbReference>
<dbReference type="GO" id="GO:0022625">
    <property type="term" value="C:cytosolic large ribosomal subunit"/>
    <property type="evidence" value="ECO:0007669"/>
    <property type="project" value="TreeGrafter"/>
</dbReference>
<dbReference type="GO" id="GO:0003735">
    <property type="term" value="F:structural constituent of ribosome"/>
    <property type="evidence" value="ECO:0007669"/>
    <property type="project" value="InterPro"/>
</dbReference>
<dbReference type="GO" id="GO:0006412">
    <property type="term" value="P:translation"/>
    <property type="evidence" value="ECO:0007669"/>
    <property type="project" value="UniProtKB-UniRule"/>
</dbReference>
<dbReference type="CDD" id="cd00427">
    <property type="entry name" value="Ribosomal_L29_HIP"/>
    <property type="match status" value="1"/>
</dbReference>
<dbReference type="FunFam" id="1.10.287.310:FF:000001">
    <property type="entry name" value="50S ribosomal protein L29"/>
    <property type="match status" value="1"/>
</dbReference>
<dbReference type="Gene3D" id="1.10.287.310">
    <property type="match status" value="1"/>
</dbReference>
<dbReference type="HAMAP" id="MF_00374">
    <property type="entry name" value="Ribosomal_uL29"/>
    <property type="match status" value="1"/>
</dbReference>
<dbReference type="InterPro" id="IPR050063">
    <property type="entry name" value="Ribosomal_protein_uL29"/>
</dbReference>
<dbReference type="InterPro" id="IPR001854">
    <property type="entry name" value="Ribosomal_uL29"/>
</dbReference>
<dbReference type="InterPro" id="IPR036049">
    <property type="entry name" value="Ribosomal_uL29_sf"/>
</dbReference>
<dbReference type="NCBIfam" id="TIGR00012">
    <property type="entry name" value="L29"/>
    <property type="match status" value="1"/>
</dbReference>
<dbReference type="PANTHER" id="PTHR10916">
    <property type="entry name" value="60S RIBOSOMAL PROTEIN L35/50S RIBOSOMAL PROTEIN L29"/>
    <property type="match status" value="1"/>
</dbReference>
<dbReference type="PANTHER" id="PTHR10916:SF0">
    <property type="entry name" value="LARGE RIBOSOMAL SUBUNIT PROTEIN UL29C"/>
    <property type="match status" value="1"/>
</dbReference>
<dbReference type="Pfam" id="PF00831">
    <property type="entry name" value="Ribosomal_L29"/>
    <property type="match status" value="1"/>
</dbReference>
<dbReference type="SUPFAM" id="SSF46561">
    <property type="entry name" value="Ribosomal protein L29 (L29p)"/>
    <property type="match status" value="1"/>
</dbReference>
<organism>
    <name type="scientific">Maricaulis maris (strain MCS10)</name>
    <name type="common">Caulobacter maris</name>
    <dbReference type="NCBI Taxonomy" id="394221"/>
    <lineage>
        <taxon>Bacteria</taxon>
        <taxon>Pseudomonadati</taxon>
        <taxon>Pseudomonadota</taxon>
        <taxon>Alphaproteobacteria</taxon>
        <taxon>Maricaulales</taxon>
        <taxon>Maricaulaceae</taxon>
        <taxon>Maricaulis</taxon>
    </lineage>
</organism>
<reference key="1">
    <citation type="submission" date="2006-08" db="EMBL/GenBank/DDBJ databases">
        <title>Complete sequence of Maricaulis maris MCS10.</title>
        <authorList>
            <consortium name="US DOE Joint Genome Institute"/>
            <person name="Copeland A."/>
            <person name="Lucas S."/>
            <person name="Lapidus A."/>
            <person name="Barry K."/>
            <person name="Detter J.C."/>
            <person name="Glavina del Rio T."/>
            <person name="Hammon N."/>
            <person name="Israni S."/>
            <person name="Dalin E."/>
            <person name="Tice H."/>
            <person name="Pitluck S."/>
            <person name="Saunders E."/>
            <person name="Brettin T."/>
            <person name="Bruce D."/>
            <person name="Han C."/>
            <person name="Tapia R."/>
            <person name="Gilna P."/>
            <person name="Schmutz J."/>
            <person name="Larimer F."/>
            <person name="Land M."/>
            <person name="Hauser L."/>
            <person name="Kyrpides N."/>
            <person name="Mikhailova N."/>
            <person name="Viollier P."/>
            <person name="Stephens C."/>
            <person name="Richardson P."/>
        </authorList>
    </citation>
    <scope>NUCLEOTIDE SEQUENCE [LARGE SCALE GENOMIC DNA]</scope>
    <source>
        <strain>MCS10</strain>
    </source>
</reference>
<feature type="chain" id="PRO_1000007515" description="Large ribosomal subunit protein uL29">
    <location>
        <begin position="1"/>
        <end position="68"/>
    </location>
</feature>
<protein>
    <recommendedName>
        <fullName evidence="1">Large ribosomal subunit protein uL29</fullName>
    </recommendedName>
    <alternativeName>
        <fullName evidence="2">50S ribosomal protein L29</fullName>
    </alternativeName>
</protein>
<accession>Q0ANQ8</accession>
<evidence type="ECO:0000255" key="1">
    <source>
        <dbReference type="HAMAP-Rule" id="MF_00374"/>
    </source>
</evidence>
<evidence type="ECO:0000305" key="2"/>
<comment type="similarity">
    <text evidence="1">Belongs to the universal ribosomal protein uL29 family.</text>
</comment>
<name>RL29_MARMM</name>
<proteinExistence type="inferred from homology"/>
<gene>
    <name evidence="1" type="primary">rpmC</name>
    <name type="ordered locus">Mmar10_1787</name>
</gene>